<feature type="chain" id="PRO_1000003921" description="Small ribosomal subunit protein uS2">
    <location>
        <begin position="1"/>
        <end position="267"/>
    </location>
</feature>
<feature type="region of interest" description="Disordered" evidence="2">
    <location>
        <begin position="222"/>
        <end position="267"/>
    </location>
</feature>
<feature type="compositionally biased region" description="Basic and acidic residues" evidence="2">
    <location>
        <begin position="223"/>
        <end position="240"/>
    </location>
</feature>
<feature type="compositionally biased region" description="Acidic residues" evidence="2">
    <location>
        <begin position="241"/>
        <end position="267"/>
    </location>
</feature>
<evidence type="ECO:0000255" key="1">
    <source>
        <dbReference type="HAMAP-Rule" id="MF_00291"/>
    </source>
</evidence>
<evidence type="ECO:0000256" key="2">
    <source>
        <dbReference type="SAM" id="MobiDB-lite"/>
    </source>
</evidence>
<evidence type="ECO:0000305" key="3"/>
<name>RS2_CAMHC</name>
<proteinExistence type="inferred from homology"/>
<gene>
    <name evidence="1" type="primary">rpsB</name>
    <name type="ordered locus">CHAB381_0840</name>
</gene>
<reference key="1">
    <citation type="submission" date="2007-07" db="EMBL/GenBank/DDBJ databases">
        <title>Complete genome sequence of Campylobacter hominis ATCC BAA-381, a commensal isolated from the human gastrointestinal tract.</title>
        <authorList>
            <person name="Fouts D.E."/>
            <person name="Mongodin E.F."/>
            <person name="Puiu D."/>
            <person name="Sebastian Y."/>
            <person name="Miller W.G."/>
            <person name="Mandrell R.E."/>
            <person name="Nelson K.E."/>
        </authorList>
    </citation>
    <scope>NUCLEOTIDE SEQUENCE [LARGE SCALE GENOMIC DNA]</scope>
    <source>
        <strain>ATCC BAA-381 / DSM 21671 / CCUG 45161 / LMG 19568 / NCTC 13146 / CH001A</strain>
    </source>
</reference>
<keyword id="KW-1185">Reference proteome</keyword>
<keyword id="KW-0687">Ribonucleoprotein</keyword>
<keyword id="KW-0689">Ribosomal protein</keyword>
<dbReference type="EMBL" id="CP000776">
    <property type="protein sequence ID" value="ABS51870.1"/>
    <property type="molecule type" value="Genomic_DNA"/>
</dbReference>
<dbReference type="RefSeq" id="WP_012108693.1">
    <property type="nucleotide sequence ID" value="NC_009714.1"/>
</dbReference>
<dbReference type="SMR" id="A7I1L3"/>
<dbReference type="STRING" id="360107.CHAB381_0840"/>
<dbReference type="KEGG" id="cha:CHAB381_0840"/>
<dbReference type="eggNOG" id="COG0052">
    <property type="taxonomic scope" value="Bacteria"/>
</dbReference>
<dbReference type="HOGENOM" id="CLU_040318_1_2_7"/>
<dbReference type="OrthoDB" id="9808036at2"/>
<dbReference type="Proteomes" id="UP000002407">
    <property type="component" value="Chromosome"/>
</dbReference>
<dbReference type="GO" id="GO:0022627">
    <property type="term" value="C:cytosolic small ribosomal subunit"/>
    <property type="evidence" value="ECO:0007669"/>
    <property type="project" value="TreeGrafter"/>
</dbReference>
<dbReference type="GO" id="GO:0003735">
    <property type="term" value="F:structural constituent of ribosome"/>
    <property type="evidence" value="ECO:0007669"/>
    <property type="project" value="InterPro"/>
</dbReference>
<dbReference type="GO" id="GO:0006412">
    <property type="term" value="P:translation"/>
    <property type="evidence" value="ECO:0007669"/>
    <property type="project" value="UniProtKB-UniRule"/>
</dbReference>
<dbReference type="CDD" id="cd01425">
    <property type="entry name" value="RPS2"/>
    <property type="match status" value="1"/>
</dbReference>
<dbReference type="FunFam" id="1.10.287.610:FF:000001">
    <property type="entry name" value="30S ribosomal protein S2"/>
    <property type="match status" value="1"/>
</dbReference>
<dbReference type="Gene3D" id="3.40.50.10490">
    <property type="entry name" value="Glucose-6-phosphate isomerase like protein, domain 1"/>
    <property type="match status" value="1"/>
</dbReference>
<dbReference type="Gene3D" id="1.10.287.610">
    <property type="entry name" value="Helix hairpin bin"/>
    <property type="match status" value="1"/>
</dbReference>
<dbReference type="HAMAP" id="MF_00291_B">
    <property type="entry name" value="Ribosomal_uS2_B"/>
    <property type="match status" value="1"/>
</dbReference>
<dbReference type="InterPro" id="IPR001865">
    <property type="entry name" value="Ribosomal_uS2"/>
</dbReference>
<dbReference type="InterPro" id="IPR005706">
    <property type="entry name" value="Ribosomal_uS2_bac/mit/plastid"/>
</dbReference>
<dbReference type="InterPro" id="IPR018130">
    <property type="entry name" value="Ribosomal_uS2_CS"/>
</dbReference>
<dbReference type="InterPro" id="IPR023591">
    <property type="entry name" value="Ribosomal_uS2_flav_dom_sf"/>
</dbReference>
<dbReference type="NCBIfam" id="TIGR01011">
    <property type="entry name" value="rpsB_bact"/>
    <property type="match status" value="1"/>
</dbReference>
<dbReference type="PANTHER" id="PTHR12534">
    <property type="entry name" value="30S RIBOSOMAL PROTEIN S2 PROKARYOTIC AND ORGANELLAR"/>
    <property type="match status" value="1"/>
</dbReference>
<dbReference type="PANTHER" id="PTHR12534:SF0">
    <property type="entry name" value="SMALL RIBOSOMAL SUBUNIT PROTEIN US2M"/>
    <property type="match status" value="1"/>
</dbReference>
<dbReference type="Pfam" id="PF00318">
    <property type="entry name" value="Ribosomal_S2"/>
    <property type="match status" value="1"/>
</dbReference>
<dbReference type="PRINTS" id="PR00395">
    <property type="entry name" value="RIBOSOMALS2"/>
</dbReference>
<dbReference type="SUPFAM" id="SSF52313">
    <property type="entry name" value="Ribosomal protein S2"/>
    <property type="match status" value="1"/>
</dbReference>
<dbReference type="PROSITE" id="PS00962">
    <property type="entry name" value="RIBOSOMAL_S2_1"/>
    <property type="match status" value="1"/>
</dbReference>
<dbReference type="PROSITE" id="PS00963">
    <property type="entry name" value="RIBOSOMAL_S2_2"/>
    <property type="match status" value="1"/>
</dbReference>
<comment type="similarity">
    <text evidence="1">Belongs to the universal ribosomal protein uS2 family.</text>
</comment>
<organism>
    <name type="scientific">Campylobacter hominis (strain ATCC BAA-381 / DSM 21671 / CCUG 45161 / LMG 19568 / NCTC 13146 / CH001A)</name>
    <dbReference type="NCBI Taxonomy" id="360107"/>
    <lineage>
        <taxon>Bacteria</taxon>
        <taxon>Pseudomonadati</taxon>
        <taxon>Campylobacterota</taxon>
        <taxon>Epsilonproteobacteria</taxon>
        <taxon>Campylobacterales</taxon>
        <taxon>Campylobacteraceae</taxon>
        <taxon>Campylobacter</taxon>
    </lineage>
</organism>
<protein>
    <recommendedName>
        <fullName evidence="1">Small ribosomal subunit protein uS2</fullName>
    </recommendedName>
    <alternativeName>
        <fullName evidence="3">30S ribosomal protein S2</fullName>
    </alternativeName>
</protein>
<accession>A7I1L3</accession>
<sequence length="267" mass="30712">MVTMRDLLECGVHFGHQTRRWNPKMKKFIFGERKGIYIIDLQKTIRYFRYTYNIVRDAAAEGKTILFVGTKKQAGAAIKEFAEKCEMPYVNHRWLGGMLTNFDTIKQSIRKLEVIEQMETDGSMDLLTKKEAGMLKSKKAKLELYLGGIRNMKNLPDMVFVIDCVKEKIAVKEANRLGMPVIAPLDTNCDPDVVDFPIPGNDDAIRSIQLFCQEMSEAINEGKALRDQDSEEEIQNKEQDEVSQEEKDDILDEAMNEEDFEIPEDKE</sequence>